<comment type="function">
    <text evidence="1">Involved in mRNA degradation. Catalyzes the phosphorolysis of single-stranded polyribonucleotides processively in the 3'- to 5'-direction.</text>
</comment>
<comment type="catalytic activity">
    <reaction evidence="1">
        <text>RNA(n+1) + phosphate = RNA(n) + a ribonucleoside 5'-diphosphate</text>
        <dbReference type="Rhea" id="RHEA:22096"/>
        <dbReference type="Rhea" id="RHEA-COMP:14527"/>
        <dbReference type="Rhea" id="RHEA-COMP:17342"/>
        <dbReference type="ChEBI" id="CHEBI:43474"/>
        <dbReference type="ChEBI" id="CHEBI:57930"/>
        <dbReference type="ChEBI" id="CHEBI:140395"/>
        <dbReference type="EC" id="2.7.7.8"/>
    </reaction>
</comment>
<comment type="cofactor">
    <cofactor evidence="1">
        <name>Mg(2+)</name>
        <dbReference type="ChEBI" id="CHEBI:18420"/>
    </cofactor>
</comment>
<comment type="subcellular location">
    <subcellularLocation>
        <location evidence="1">Cytoplasm</location>
    </subcellularLocation>
</comment>
<comment type="similarity">
    <text evidence="1">Belongs to the polyribonucleotide nucleotidyltransferase family.</text>
</comment>
<evidence type="ECO:0000255" key="1">
    <source>
        <dbReference type="HAMAP-Rule" id="MF_01595"/>
    </source>
</evidence>
<proteinExistence type="inferred from homology"/>
<gene>
    <name evidence="1" type="primary">pnp</name>
    <name type="ordered locus">CLK_1788</name>
</gene>
<keyword id="KW-0963">Cytoplasm</keyword>
<keyword id="KW-0460">Magnesium</keyword>
<keyword id="KW-0479">Metal-binding</keyword>
<keyword id="KW-0548">Nucleotidyltransferase</keyword>
<keyword id="KW-0694">RNA-binding</keyword>
<keyword id="KW-0808">Transferase</keyword>
<feature type="chain" id="PRO_1000192472" description="Polyribonucleotide nucleotidyltransferase">
    <location>
        <begin position="1"/>
        <end position="702"/>
    </location>
</feature>
<feature type="domain" description="KH" evidence="1">
    <location>
        <begin position="552"/>
        <end position="612"/>
    </location>
</feature>
<feature type="domain" description="S1 motif" evidence="1">
    <location>
        <begin position="622"/>
        <end position="690"/>
    </location>
</feature>
<feature type="binding site" evidence="1">
    <location>
        <position position="485"/>
    </location>
    <ligand>
        <name>Mg(2+)</name>
        <dbReference type="ChEBI" id="CHEBI:18420"/>
    </ligand>
</feature>
<feature type="binding site" evidence="1">
    <location>
        <position position="491"/>
    </location>
    <ligand>
        <name>Mg(2+)</name>
        <dbReference type="ChEBI" id="CHEBI:18420"/>
    </ligand>
</feature>
<accession>B1KWK1</accession>
<protein>
    <recommendedName>
        <fullName evidence="1">Polyribonucleotide nucleotidyltransferase</fullName>
        <ecNumber evidence="1">2.7.7.8</ecNumber>
    </recommendedName>
    <alternativeName>
        <fullName evidence="1">Polynucleotide phosphorylase</fullName>
        <shortName evidence="1">PNPase</shortName>
    </alternativeName>
</protein>
<reference key="1">
    <citation type="journal article" date="2007" name="PLoS ONE">
        <title>Analysis of the neurotoxin complex genes in Clostridium botulinum A1-A4 and B1 strains: BoNT/A3, /Ba4 and /B1 clusters are located within plasmids.</title>
        <authorList>
            <person name="Smith T.J."/>
            <person name="Hill K.K."/>
            <person name="Foley B.T."/>
            <person name="Detter J.C."/>
            <person name="Munk A.C."/>
            <person name="Bruce D.C."/>
            <person name="Doggett N.A."/>
            <person name="Smith L.A."/>
            <person name="Marks J.D."/>
            <person name="Xie G."/>
            <person name="Brettin T.S."/>
        </authorList>
    </citation>
    <scope>NUCLEOTIDE SEQUENCE [LARGE SCALE GENOMIC DNA]</scope>
    <source>
        <strain>Loch Maree / Type A3</strain>
    </source>
</reference>
<organism>
    <name type="scientific">Clostridium botulinum (strain Loch Maree / Type A3)</name>
    <dbReference type="NCBI Taxonomy" id="498214"/>
    <lineage>
        <taxon>Bacteria</taxon>
        <taxon>Bacillati</taxon>
        <taxon>Bacillota</taxon>
        <taxon>Clostridia</taxon>
        <taxon>Eubacteriales</taxon>
        <taxon>Clostridiaceae</taxon>
        <taxon>Clostridium</taxon>
    </lineage>
</organism>
<dbReference type="EC" id="2.7.7.8" evidence="1"/>
<dbReference type="EMBL" id="CP000962">
    <property type="protein sequence ID" value="ACA54817.1"/>
    <property type="molecule type" value="Genomic_DNA"/>
</dbReference>
<dbReference type="RefSeq" id="WP_012342871.1">
    <property type="nucleotide sequence ID" value="NC_010520.1"/>
</dbReference>
<dbReference type="SMR" id="B1KWK1"/>
<dbReference type="KEGG" id="cbl:CLK_1788"/>
<dbReference type="HOGENOM" id="CLU_004217_2_2_9"/>
<dbReference type="GO" id="GO:0005829">
    <property type="term" value="C:cytosol"/>
    <property type="evidence" value="ECO:0007669"/>
    <property type="project" value="TreeGrafter"/>
</dbReference>
<dbReference type="GO" id="GO:0000175">
    <property type="term" value="F:3'-5'-RNA exonuclease activity"/>
    <property type="evidence" value="ECO:0007669"/>
    <property type="project" value="TreeGrafter"/>
</dbReference>
<dbReference type="GO" id="GO:0000287">
    <property type="term" value="F:magnesium ion binding"/>
    <property type="evidence" value="ECO:0007669"/>
    <property type="project" value="UniProtKB-UniRule"/>
</dbReference>
<dbReference type="GO" id="GO:0004654">
    <property type="term" value="F:polyribonucleotide nucleotidyltransferase activity"/>
    <property type="evidence" value="ECO:0007669"/>
    <property type="project" value="UniProtKB-UniRule"/>
</dbReference>
<dbReference type="GO" id="GO:0003723">
    <property type="term" value="F:RNA binding"/>
    <property type="evidence" value="ECO:0007669"/>
    <property type="project" value="UniProtKB-UniRule"/>
</dbReference>
<dbReference type="GO" id="GO:0006402">
    <property type="term" value="P:mRNA catabolic process"/>
    <property type="evidence" value="ECO:0007669"/>
    <property type="project" value="UniProtKB-UniRule"/>
</dbReference>
<dbReference type="GO" id="GO:0006396">
    <property type="term" value="P:RNA processing"/>
    <property type="evidence" value="ECO:0007669"/>
    <property type="project" value="InterPro"/>
</dbReference>
<dbReference type="CDD" id="cd02393">
    <property type="entry name" value="KH-I_PNPase"/>
    <property type="match status" value="1"/>
</dbReference>
<dbReference type="CDD" id="cd11363">
    <property type="entry name" value="RNase_PH_PNPase_1"/>
    <property type="match status" value="1"/>
</dbReference>
<dbReference type="CDD" id="cd11364">
    <property type="entry name" value="RNase_PH_PNPase_2"/>
    <property type="match status" value="1"/>
</dbReference>
<dbReference type="CDD" id="cd04472">
    <property type="entry name" value="S1_PNPase"/>
    <property type="match status" value="1"/>
</dbReference>
<dbReference type="FunFam" id="2.40.50.140:FF:000023">
    <property type="entry name" value="Polyribonucleotide nucleotidyltransferase"/>
    <property type="match status" value="1"/>
</dbReference>
<dbReference type="FunFam" id="3.30.1370.10:FF:000001">
    <property type="entry name" value="Polyribonucleotide nucleotidyltransferase"/>
    <property type="match status" value="1"/>
</dbReference>
<dbReference type="FunFam" id="3.30.230.70:FF:000001">
    <property type="entry name" value="Polyribonucleotide nucleotidyltransferase"/>
    <property type="match status" value="1"/>
</dbReference>
<dbReference type="FunFam" id="3.30.230.70:FF:000037">
    <property type="entry name" value="Polyribonucleotide nucleotidyltransferase"/>
    <property type="match status" value="1"/>
</dbReference>
<dbReference type="Gene3D" id="3.30.230.70">
    <property type="entry name" value="GHMP Kinase, N-terminal domain"/>
    <property type="match status" value="2"/>
</dbReference>
<dbReference type="Gene3D" id="3.30.1370.10">
    <property type="entry name" value="K Homology domain, type 1"/>
    <property type="match status" value="1"/>
</dbReference>
<dbReference type="Gene3D" id="2.40.50.140">
    <property type="entry name" value="Nucleic acid-binding proteins"/>
    <property type="match status" value="1"/>
</dbReference>
<dbReference type="HAMAP" id="MF_01595">
    <property type="entry name" value="PNPase"/>
    <property type="match status" value="1"/>
</dbReference>
<dbReference type="InterPro" id="IPR001247">
    <property type="entry name" value="ExoRNase_PH_dom1"/>
</dbReference>
<dbReference type="InterPro" id="IPR015847">
    <property type="entry name" value="ExoRNase_PH_dom2"/>
</dbReference>
<dbReference type="InterPro" id="IPR036345">
    <property type="entry name" value="ExoRNase_PH_dom2_sf"/>
</dbReference>
<dbReference type="InterPro" id="IPR004087">
    <property type="entry name" value="KH_dom"/>
</dbReference>
<dbReference type="InterPro" id="IPR004088">
    <property type="entry name" value="KH_dom_type_1"/>
</dbReference>
<dbReference type="InterPro" id="IPR036612">
    <property type="entry name" value="KH_dom_type_1_sf"/>
</dbReference>
<dbReference type="InterPro" id="IPR012340">
    <property type="entry name" value="NA-bd_OB-fold"/>
</dbReference>
<dbReference type="InterPro" id="IPR012162">
    <property type="entry name" value="PNPase"/>
</dbReference>
<dbReference type="InterPro" id="IPR027408">
    <property type="entry name" value="PNPase/RNase_PH_dom_sf"/>
</dbReference>
<dbReference type="InterPro" id="IPR015848">
    <property type="entry name" value="PNPase_PH_RNA-bd_bac/org-type"/>
</dbReference>
<dbReference type="InterPro" id="IPR036456">
    <property type="entry name" value="PNPase_PH_RNA-bd_sf"/>
</dbReference>
<dbReference type="InterPro" id="IPR020568">
    <property type="entry name" value="Ribosomal_Su5_D2-typ_SF"/>
</dbReference>
<dbReference type="InterPro" id="IPR003029">
    <property type="entry name" value="S1_domain"/>
</dbReference>
<dbReference type="NCBIfam" id="TIGR03591">
    <property type="entry name" value="polynuc_phos"/>
    <property type="match status" value="1"/>
</dbReference>
<dbReference type="NCBIfam" id="NF008805">
    <property type="entry name" value="PRK11824.1"/>
    <property type="match status" value="1"/>
</dbReference>
<dbReference type="PANTHER" id="PTHR11252">
    <property type="entry name" value="POLYRIBONUCLEOTIDE NUCLEOTIDYLTRANSFERASE"/>
    <property type="match status" value="1"/>
</dbReference>
<dbReference type="PANTHER" id="PTHR11252:SF0">
    <property type="entry name" value="POLYRIBONUCLEOTIDE NUCLEOTIDYLTRANSFERASE 1, MITOCHONDRIAL"/>
    <property type="match status" value="1"/>
</dbReference>
<dbReference type="Pfam" id="PF00013">
    <property type="entry name" value="KH_1"/>
    <property type="match status" value="1"/>
</dbReference>
<dbReference type="Pfam" id="PF03726">
    <property type="entry name" value="PNPase"/>
    <property type="match status" value="1"/>
</dbReference>
<dbReference type="Pfam" id="PF01138">
    <property type="entry name" value="RNase_PH"/>
    <property type="match status" value="2"/>
</dbReference>
<dbReference type="Pfam" id="PF03725">
    <property type="entry name" value="RNase_PH_C"/>
    <property type="match status" value="1"/>
</dbReference>
<dbReference type="Pfam" id="PF00575">
    <property type="entry name" value="S1"/>
    <property type="match status" value="1"/>
</dbReference>
<dbReference type="PIRSF" id="PIRSF005499">
    <property type="entry name" value="PNPase"/>
    <property type="match status" value="1"/>
</dbReference>
<dbReference type="SMART" id="SM00322">
    <property type="entry name" value="KH"/>
    <property type="match status" value="1"/>
</dbReference>
<dbReference type="SMART" id="SM00316">
    <property type="entry name" value="S1"/>
    <property type="match status" value="1"/>
</dbReference>
<dbReference type="SUPFAM" id="SSF54791">
    <property type="entry name" value="Eukaryotic type KH-domain (KH-domain type I)"/>
    <property type="match status" value="1"/>
</dbReference>
<dbReference type="SUPFAM" id="SSF50249">
    <property type="entry name" value="Nucleic acid-binding proteins"/>
    <property type="match status" value="1"/>
</dbReference>
<dbReference type="SUPFAM" id="SSF46915">
    <property type="entry name" value="Polynucleotide phosphorylase/guanosine pentaphosphate synthase (PNPase/GPSI), domain 3"/>
    <property type="match status" value="1"/>
</dbReference>
<dbReference type="SUPFAM" id="SSF55666">
    <property type="entry name" value="Ribonuclease PH domain 2-like"/>
    <property type="match status" value="2"/>
</dbReference>
<dbReference type="SUPFAM" id="SSF54211">
    <property type="entry name" value="Ribosomal protein S5 domain 2-like"/>
    <property type="match status" value="2"/>
</dbReference>
<dbReference type="PROSITE" id="PS50084">
    <property type="entry name" value="KH_TYPE_1"/>
    <property type="match status" value="1"/>
</dbReference>
<dbReference type="PROSITE" id="PS50126">
    <property type="entry name" value="S1"/>
    <property type="match status" value="1"/>
</dbReference>
<name>PNP_CLOBM</name>
<sequence length="702" mass="77455">MIHTLETTVAGRKMKVDFGKTGMLSNAAIFMSYGDTVVMINANASKEPREGIDFFPLSVEYEERLYSVGKIPGGFIKREGKPSDKSILHARSIDRPLRPLFPKGYRNDVQIVNTVLSVEQDNLPEILAINGSSLALCLSSIPFTTPVAAVSVGLVDGEFIINPTVAQRENTILDLTVCATKERVMMVEAGGQEIDEETMYSAIMFGFEECKNIVAFQEEAVAKFGKTKNEPVLYKADEEVEKEVKSFAFDMIKEAMYIMDKDERNAQLDKVKEKISEEFSEKYEDKVADIAEVIYKTQKEIVRNMLLNEDRRPDGRAFDEVRPISCEVGILPRTHGTGLFTRGLTQVMTVATLGALGDVQILDGIAEEESKRYMHHYNFPSYSVGEVRPLRGPGRREIGHGALAERALEPLIPSESEFPYTIRLVSEVLSSNGSTSQASVCGSTLALLDAGVPIKRPAAGIAMGLITSEDLEKEKVITDIQGIEDFFGDMDFKVAGTEKGITSIQFDTKIKGLSNSCVKDALEGAKKARLHILGKIKECIPEPRKELSKYAPRTEIICIDPEKIRDVIGAGGKVINKIIADTNVKIEIKEDGKIFVTSNNEPEGVKKAISIIEGLTKEVVQGEIYLGKVTKTTNFGAFVEILPGKEGLVHISKLDFARVEKVEDVVSVGDEILVKVTDIDNQGRINLSRKDAIAKKEEEKDK</sequence>